<gene>
    <name evidence="1" type="primary">pxpA</name>
    <name type="ordered locus">cgR_1095</name>
</gene>
<keyword id="KW-0067">ATP-binding</keyword>
<keyword id="KW-0378">Hydrolase</keyword>
<keyword id="KW-0547">Nucleotide-binding</keyword>
<evidence type="ECO:0000255" key="1">
    <source>
        <dbReference type="HAMAP-Rule" id="MF_00691"/>
    </source>
</evidence>
<protein>
    <recommendedName>
        <fullName evidence="1">5-oxoprolinase subunit A</fullName>
        <shortName evidence="1">5-OPase subunit A</shortName>
        <ecNumber evidence="1">3.5.2.9</ecNumber>
    </recommendedName>
    <alternativeName>
        <fullName evidence="1">5-oxoprolinase (ATP-hydrolyzing) subunit A</fullName>
    </alternativeName>
</protein>
<feature type="chain" id="PRO_1000045201" description="5-oxoprolinase subunit A">
    <location>
        <begin position="1"/>
        <end position="252"/>
    </location>
</feature>
<reference key="1">
    <citation type="journal article" date="2007" name="Microbiology">
        <title>Comparative analysis of the Corynebacterium glutamicum group and complete genome sequence of strain R.</title>
        <authorList>
            <person name="Yukawa H."/>
            <person name="Omumasaba C.A."/>
            <person name="Nonaka H."/>
            <person name="Kos P."/>
            <person name="Okai N."/>
            <person name="Suzuki N."/>
            <person name="Suda M."/>
            <person name="Tsuge Y."/>
            <person name="Watanabe J."/>
            <person name="Ikeda Y."/>
            <person name="Vertes A.A."/>
            <person name="Inui M."/>
        </authorList>
    </citation>
    <scope>NUCLEOTIDE SEQUENCE [LARGE SCALE GENOMIC DNA]</scope>
    <source>
        <strain>R</strain>
    </source>
</reference>
<comment type="function">
    <text evidence="1">Catalyzes the cleavage of 5-oxoproline to form L-glutamate coupled to the hydrolysis of ATP to ADP and inorganic phosphate.</text>
</comment>
<comment type="catalytic activity">
    <reaction evidence="1">
        <text>5-oxo-L-proline + ATP + 2 H2O = L-glutamate + ADP + phosphate + H(+)</text>
        <dbReference type="Rhea" id="RHEA:10348"/>
        <dbReference type="ChEBI" id="CHEBI:15377"/>
        <dbReference type="ChEBI" id="CHEBI:15378"/>
        <dbReference type="ChEBI" id="CHEBI:29985"/>
        <dbReference type="ChEBI" id="CHEBI:30616"/>
        <dbReference type="ChEBI" id="CHEBI:43474"/>
        <dbReference type="ChEBI" id="CHEBI:58402"/>
        <dbReference type="ChEBI" id="CHEBI:456216"/>
        <dbReference type="EC" id="3.5.2.9"/>
    </reaction>
</comment>
<comment type="subunit">
    <text evidence="1">Forms a complex composed of PxpA, PxpB and PxpC.</text>
</comment>
<comment type="similarity">
    <text evidence="1">Belongs to the LamB/PxpA family.</text>
</comment>
<sequence length="252" mass="26338">MTTIDLNSDLGESYGSWVMGNDVAVLDLVSSANIACGFHAGDATVLFKTVRAAHARHVRIGAHIGYNDIAGFGRRNLDVAHDDLVAETIYQIGAIQAAAKASGAVVEYVKPHGALYNTIAVDEAQAAAVIEGIKLVNPELSLMALAGSQIVEQARAAGLQVEQETFADRAYTADGQLVSRKLPGAVLHDPETAARQALAFATGQPITAITGESVLVDANSICVHGDNPQALALVEKIVTTLAAHEVQVSHAR</sequence>
<dbReference type="EC" id="3.5.2.9" evidence="1"/>
<dbReference type="EMBL" id="AP009044">
    <property type="protein sequence ID" value="BAF54071.1"/>
    <property type="molecule type" value="Genomic_DNA"/>
</dbReference>
<dbReference type="RefSeq" id="WP_003856803.1">
    <property type="nucleotide sequence ID" value="NC_009342.1"/>
</dbReference>
<dbReference type="SMR" id="A4QCX4"/>
<dbReference type="KEGG" id="cgt:cgR_1095"/>
<dbReference type="HOGENOM" id="CLU_069535_0_0_11"/>
<dbReference type="PhylomeDB" id="A4QCX4"/>
<dbReference type="Proteomes" id="UP000006698">
    <property type="component" value="Chromosome"/>
</dbReference>
<dbReference type="GO" id="GO:0017168">
    <property type="term" value="F:5-oxoprolinase (ATP-hydrolyzing) activity"/>
    <property type="evidence" value="ECO:0007669"/>
    <property type="project" value="UniProtKB-UniRule"/>
</dbReference>
<dbReference type="GO" id="GO:0005524">
    <property type="term" value="F:ATP binding"/>
    <property type="evidence" value="ECO:0007669"/>
    <property type="project" value="UniProtKB-UniRule"/>
</dbReference>
<dbReference type="GO" id="GO:0005975">
    <property type="term" value="P:carbohydrate metabolic process"/>
    <property type="evidence" value="ECO:0007669"/>
    <property type="project" value="InterPro"/>
</dbReference>
<dbReference type="CDD" id="cd10787">
    <property type="entry name" value="LamB_YcsF_like"/>
    <property type="match status" value="1"/>
</dbReference>
<dbReference type="Gene3D" id="3.20.20.370">
    <property type="entry name" value="Glycoside hydrolase/deacetylase"/>
    <property type="match status" value="1"/>
</dbReference>
<dbReference type="HAMAP" id="MF_00691">
    <property type="entry name" value="PxpA"/>
    <property type="match status" value="1"/>
</dbReference>
<dbReference type="InterPro" id="IPR011330">
    <property type="entry name" value="Glyco_hydro/deAcase_b/a-brl"/>
</dbReference>
<dbReference type="InterPro" id="IPR005501">
    <property type="entry name" value="LamB/YcsF/PxpA-like"/>
</dbReference>
<dbReference type="NCBIfam" id="NF003814">
    <property type="entry name" value="PRK05406.1-3"/>
    <property type="match status" value="1"/>
</dbReference>
<dbReference type="NCBIfam" id="NF003816">
    <property type="entry name" value="PRK05406.1-5"/>
    <property type="match status" value="1"/>
</dbReference>
<dbReference type="PANTHER" id="PTHR30292:SF0">
    <property type="entry name" value="5-OXOPROLINASE SUBUNIT A"/>
    <property type="match status" value="1"/>
</dbReference>
<dbReference type="PANTHER" id="PTHR30292">
    <property type="entry name" value="UNCHARACTERIZED PROTEIN YBGL-RELATED"/>
    <property type="match status" value="1"/>
</dbReference>
<dbReference type="Pfam" id="PF03746">
    <property type="entry name" value="LamB_YcsF"/>
    <property type="match status" value="1"/>
</dbReference>
<dbReference type="SUPFAM" id="SSF88713">
    <property type="entry name" value="Glycoside hydrolase/deacetylase"/>
    <property type="match status" value="1"/>
</dbReference>
<name>PXPA_CORGB</name>
<accession>A4QCX4</accession>
<proteinExistence type="inferred from homology"/>
<organism>
    <name type="scientific">Corynebacterium glutamicum (strain R)</name>
    <dbReference type="NCBI Taxonomy" id="340322"/>
    <lineage>
        <taxon>Bacteria</taxon>
        <taxon>Bacillati</taxon>
        <taxon>Actinomycetota</taxon>
        <taxon>Actinomycetes</taxon>
        <taxon>Mycobacteriales</taxon>
        <taxon>Corynebacteriaceae</taxon>
        <taxon>Corynebacterium</taxon>
    </lineage>
</organism>